<dbReference type="EC" id="3.1.-.-" evidence="1"/>
<dbReference type="EC" id="3.6.4.-" evidence="1"/>
<dbReference type="EMBL" id="CP000829">
    <property type="protein sequence ID" value="ACI61708.1"/>
    <property type="molecule type" value="Genomic_DNA"/>
</dbReference>
<dbReference type="SMR" id="B5XI46"/>
<dbReference type="KEGG" id="soz:Spy49_1434c"/>
<dbReference type="HOGENOM" id="CLU_011252_2_1_9"/>
<dbReference type="Proteomes" id="UP000001039">
    <property type="component" value="Chromosome"/>
</dbReference>
<dbReference type="GO" id="GO:0005524">
    <property type="term" value="F:ATP binding"/>
    <property type="evidence" value="ECO:0007669"/>
    <property type="project" value="UniProtKB-UniRule"/>
</dbReference>
<dbReference type="GO" id="GO:0016887">
    <property type="term" value="F:ATP hydrolysis activity"/>
    <property type="evidence" value="ECO:0007669"/>
    <property type="project" value="InterPro"/>
</dbReference>
<dbReference type="GO" id="GO:0140664">
    <property type="term" value="F:ATP-dependent DNA damage sensor activity"/>
    <property type="evidence" value="ECO:0007669"/>
    <property type="project" value="InterPro"/>
</dbReference>
<dbReference type="GO" id="GO:0004519">
    <property type="term" value="F:endonuclease activity"/>
    <property type="evidence" value="ECO:0007669"/>
    <property type="project" value="UniProtKB-UniRule"/>
</dbReference>
<dbReference type="GO" id="GO:0030983">
    <property type="term" value="F:mismatched DNA binding"/>
    <property type="evidence" value="ECO:0007669"/>
    <property type="project" value="InterPro"/>
</dbReference>
<dbReference type="GO" id="GO:0043023">
    <property type="term" value="F:ribosomal large subunit binding"/>
    <property type="evidence" value="ECO:0007669"/>
    <property type="project" value="UniProtKB-UniRule"/>
</dbReference>
<dbReference type="GO" id="GO:0019843">
    <property type="term" value="F:rRNA binding"/>
    <property type="evidence" value="ECO:0007669"/>
    <property type="project" value="UniProtKB-UniRule"/>
</dbReference>
<dbReference type="GO" id="GO:0006298">
    <property type="term" value="P:mismatch repair"/>
    <property type="evidence" value="ECO:0007669"/>
    <property type="project" value="InterPro"/>
</dbReference>
<dbReference type="GO" id="GO:0045910">
    <property type="term" value="P:negative regulation of DNA recombination"/>
    <property type="evidence" value="ECO:0007669"/>
    <property type="project" value="InterPro"/>
</dbReference>
<dbReference type="GO" id="GO:0072344">
    <property type="term" value="P:rescue of stalled ribosome"/>
    <property type="evidence" value="ECO:0007669"/>
    <property type="project" value="UniProtKB-UniRule"/>
</dbReference>
<dbReference type="CDD" id="cd03280">
    <property type="entry name" value="ABC_MutS2"/>
    <property type="match status" value="1"/>
</dbReference>
<dbReference type="FunFam" id="3.40.50.300:FF:000830">
    <property type="entry name" value="Endonuclease MutS2"/>
    <property type="match status" value="1"/>
</dbReference>
<dbReference type="Gene3D" id="3.30.1370.110">
    <property type="match status" value="1"/>
</dbReference>
<dbReference type="Gene3D" id="3.40.50.300">
    <property type="entry name" value="P-loop containing nucleotide triphosphate hydrolases"/>
    <property type="match status" value="1"/>
</dbReference>
<dbReference type="HAMAP" id="MF_00092">
    <property type="entry name" value="MutS2"/>
    <property type="match status" value="1"/>
</dbReference>
<dbReference type="InterPro" id="IPR000432">
    <property type="entry name" value="DNA_mismatch_repair_MutS_C"/>
</dbReference>
<dbReference type="InterPro" id="IPR007696">
    <property type="entry name" value="DNA_mismatch_repair_MutS_core"/>
</dbReference>
<dbReference type="InterPro" id="IPR036187">
    <property type="entry name" value="DNA_mismatch_repair_MutS_sf"/>
</dbReference>
<dbReference type="InterPro" id="IPR046893">
    <property type="entry name" value="MSSS"/>
</dbReference>
<dbReference type="InterPro" id="IPR045076">
    <property type="entry name" value="MutS"/>
</dbReference>
<dbReference type="InterPro" id="IPR005747">
    <property type="entry name" value="MutS2"/>
</dbReference>
<dbReference type="InterPro" id="IPR027417">
    <property type="entry name" value="P-loop_NTPase"/>
</dbReference>
<dbReference type="InterPro" id="IPR002625">
    <property type="entry name" value="Smr_dom"/>
</dbReference>
<dbReference type="InterPro" id="IPR036063">
    <property type="entry name" value="Smr_dom_sf"/>
</dbReference>
<dbReference type="NCBIfam" id="TIGR01069">
    <property type="entry name" value="mutS2"/>
    <property type="match status" value="1"/>
</dbReference>
<dbReference type="PANTHER" id="PTHR48466:SF2">
    <property type="entry name" value="OS10G0509000 PROTEIN"/>
    <property type="match status" value="1"/>
</dbReference>
<dbReference type="PANTHER" id="PTHR48466">
    <property type="entry name" value="OS10G0509000 PROTEIN-RELATED"/>
    <property type="match status" value="1"/>
</dbReference>
<dbReference type="Pfam" id="PF20297">
    <property type="entry name" value="MSSS"/>
    <property type="match status" value="1"/>
</dbReference>
<dbReference type="Pfam" id="PF00488">
    <property type="entry name" value="MutS_V"/>
    <property type="match status" value="1"/>
</dbReference>
<dbReference type="Pfam" id="PF01713">
    <property type="entry name" value="Smr"/>
    <property type="match status" value="1"/>
</dbReference>
<dbReference type="PIRSF" id="PIRSF005814">
    <property type="entry name" value="MutS_YshD"/>
    <property type="match status" value="1"/>
</dbReference>
<dbReference type="SMART" id="SM00534">
    <property type="entry name" value="MUTSac"/>
    <property type="match status" value="1"/>
</dbReference>
<dbReference type="SMART" id="SM00533">
    <property type="entry name" value="MUTSd"/>
    <property type="match status" value="1"/>
</dbReference>
<dbReference type="SMART" id="SM00463">
    <property type="entry name" value="SMR"/>
    <property type="match status" value="1"/>
</dbReference>
<dbReference type="SUPFAM" id="SSF48334">
    <property type="entry name" value="DNA repair protein MutS, domain III"/>
    <property type="match status" value="1"/>
</dbReference>
<dbReference type="SUPFAM" id="SSF52540">
    <property type="entry name" value="P-loop containing nucleoside triphosphate hydrolases"/>
    <property type="match status" value="1"/>
</dbReference>
<dbReference type="SUPFAM" id="SSF160443">
    <property type="entry name" value="SMR domain-like"/>
    <property type="match status" value="1"/>
</dbReference>
<dbReference type="PROSITE" id="PS00486">
    <property type="entry name" value="DNA_MISMATCH_REPAIR_2"/>
    <property type="match status" value="1"/>
</dbReference>
<dbReference type="PROSITE" id="PS50828">
    <property type="entry name" value="SMR"/>
    <property type="match status" value="1"/>
</dbReference>
<gene>
    <name evidence="1" type="primary">mutS2</name>
    <name evidence="1" type="synonym">rqcU</name>
    <name type="ordered locus">Spy49_1434c</name>
</gene>
<comment type="function">
    <text evidence="1">Endonuclease that is involved in the suppression of homologous recombination and thus may have a key role in the control of bacterial genetic diversity.</text>
</comment>
<comment type="function">
    <text evidence="1">Acts as a ribosome collision sensor, splitting the ribosome into its 2 subunits. Detects stalled/collided 70S ribosomes which it binds and splits by an ATP-hydrolysis driven conformational change. Acts upstream of the ribosome quality control system (RQC), a ribosome-associated complex that mediates the extraction of incompletely synthesized nascent chains from stalled ribosomes and their subsequent degradation. Probably generates substrates for RQC.</text>
</comment>
<comment type="subunit">
    <text evidence="1">Homodimer. Binds to stalled ribosomes, contacting rRNA.</text>
</comment>
<comment type="similarity">
    <text evidence="1">Belongs to the DNA mismatch repair MutS family. MutS2 subfamily.</text>
</comment>
<reference key="1">
    <citation type="journal article" date="2008" name="J. Bacteriol.">
        <title>Genome sequence of a nephritogenic and highly transformable M49 strain of Streptococcus pyogenes.</title>
        <authorList>
            <person name="McShan W.M."/>
            <person name="Ferretti J.J."/>
            <person name="Karasawa T."/>
            <person name="Suvorov A.N."/>
            <person name="Lin S."/>
            <person name="Qin B."/>
            <person name="Jia H."/>
            <person name="Kenton S."/>
            <person name="Najar F."/>
            <person name="Wu H."/>
            <person name="Scott J."/>
            <person name="Roe B.A."/>
            <person name="Savic D.J."/>
        </authorList>
    </citation>
    <scope>NUCLEOTIDE SEQUENCE [LARGE SCALE GENOMIC DNA]</scope>
    <source>
        <strain>NZ131</strain>
    </source>
</reference>
<keyword id="KW-0067">ATP-binding</keyword>
<keyword id="KW-0238">DNA-binding</keyword>
<keyword id="KW-0255">Endonuclease</keyword>
<keyword id="KW-0378">Hydrolase</keyword>
<keyword id="KW-0540">Nuclease</keyword>
<keyword id="KW-0547">Nucleotide-binding</keyword>
<keyword id="KW-0694">RNA-binding</keyword>
<keyword id="KW-0699">rRNA-binding</keyword>
<accession>B5XI46</accession>
<feature type="chain" id="PRO_1000093400" description="Endonuclease MutS2">
    <location>
        <begin position="1"/>
        <end position="779"/>
    </location>
</feature>
<feature type="domain" description="Smr" evidence="1">
    <location>
        <begin position="704"/>
        <end position="779"/>
    </location>
</feature>
<feature type="binding site" evidence="1">
    <location>
        <begin position="328"/>
        <end position="335"/>
    </location>
    <ligand>
        <name>ATP</name>
        <dbReference type="ChEBI" id="CHEBI:30616"/>
    </ligand>
</feature>
<name>MUTS2_STRPZ</name>
<protein>
    <recommendedName>
        <fullName evidence="1">Endonuclease MutS2</fullName>
        <ecNumber evidence="1">3.1.-.-</ecNumber>
    </recommendedName>
    <alternativeName>
        <fullName evidence="1">Ribosome-associated protein quality control-upstream factor</fullName>
        <shortName evidence="1">RQC-upstream factor</shortName>
        <shortName evidence="1">RqcU</shortName>
        <ecNumber evidence="1">3.6.4.-</ecNumber>
    </alternativeName>
</protein>
<proteinExistence type="inferred from homology"/>
<sequence length="779" mass="87947">MNNKILEQLEFNKVKELLLPYLKTEQSQEELLELEPMTEAPKIEKSFNEISDMEQIFVEHHSFGIVSLSSISESLKRLELSADLNIQELLAIKKVLQSSSDMIHFYSDLNNISFQSLDRLFENLEQFPNLQGSFQAINDGGFLEHFASPELERIRRQLTNSERRVRQILQDMLKEKAELLSENLIASRSGRSVLPVKNTYRNRISGVVHDISSSGTTVYIEPRAVVTLNEEITQLRADERHEEGRILHAFSDLLRPHVATIRNNAWILGHLDFVRAKYLFMSDNKATIPKISNDSTLVLINVRHPLLSNPVANDLHFDHDLTAIVITGPNTGGKTIMLKTLGLAQLMGQSGLPVLADKGSKITVFNNIFADIGDEQSIEQSLSTFSSHMTHIVSILNEADRNSLVLFDELGAGTDPQEGASLAMAILEHLRLSHIKTMATTHYPELKAYGIETNFVENASMEFDAETLSPTYRFMQGVPGRSNAFEIASRLGLAPFIVKQAKQMTDSDSDVNRIIEQLEAQTLETRRRLDHIKEVEQENLKFNRAVKKLYNEFSHERDKELEKIYQEAQEIVDMALNESDTILKKLNDKSQLKPHEIIDAKAQIKKLAPQVDLSKNKVLNKAKKIKAARAPRIGDDIIVTSYGQRGTLTSQLKDGRWEAQVGIIKMTLTQDEFSLVRVQEEQKVKNKQINVVKKADSSGPRARLDLRGKRYEEAMQELDHFIDQSLLNNMGQVDIIHGIGTGVIREGVTKYLRRHKHVKHFAYAPQNAGGSGATIVTLG</sequence>
<evidence type="ECO:0000255" key="1">
    <source>
        <dbReference type="HAMAP-Rule" id="MF_00092"/>
    </source>
</evidence>
<organism>
    <name type="scientific">Streptococcus pyogenes serotype M49 (strain NZ131)</name>
    <dbReference type="NCBI Taxonomy" id="471876"/>
    <lineage>
        <taxon>Bacteria</taxon>
        <taxon>Bacillati</taxon>
        <taxon>Bacillota</taxon>
        <taxon>Bacilli</taxon>
        <taxon>Lactobacillales</taxon>
        <taxon>Streptococcaceae</taxon>
        <taxon>Streptococcus</taxon>
    </lineage>
</organism>